<evidence type="ECO:0000255" key="1">
    <source>
        <dbReference type="HAMAP-Rule" id="MF_02002"/>
    </source>
</evidence>
<gene>
    <name evidence="1" type="primary">ileS1</name>
    <name type="ordered locus">BPSL0906</name>
</gene>
<name>SYI1_BURPS</name>
<protein>
    <recommendedName>
        <fullName evidence="1">Isoleucine--tRNA ligase 1</fullName>
        <ecNumber evidence="1">6.1.1.5</ecNumber>
    </recommendedName>
    <alternativeName>
        <fullName evidence="1">Isoleucyl-tRNA synthetase 1</fullName>
        <shortName evidence="1">IleRS 1</shortName>
    </alternativeName>
</protein>
<comment type="function">
    <text evidence="1">Catalyzes the attachment of isoleucine to tRNA(Ile). As IleRS can inadvertently accommodate and process structurally similar amino acids such as valine, to avoid such errors it has two additional distinct tRNA(Ile)-dependent editing activities. One activity is designated as 'pretransfer' editing and involves the hydrolysis of activated Val-AMP. The other activity is designated 'posttransfer' editing and involves deacylation of mischarged Val-tRNA(Ile).</text>
</comment>
<comment type="catalytic activity">
    <reaction evidence="1">
        <text>tRNA(Ile) + L-isoleucine + ATP = L-isoleucyl-tRNA(Ile) + AMP + diphosphate</text>
        <dbReference type="Rhea" id="RHEA:11060"/>
        <dbReference type="Rhea" id="RHEA-COMP:9666"/>
        <dbReference type="Rhea" id="RHEA-COMP:9695"/>
        <dbReference type="ChEBI" id="CHEBI:30616"/>
        <dbReference type="ChEBI" id="CHEBI:33019"/>
        <dbReference type="ChEBI" id="CHEBI:58045"/>
        <dbReference type="ChEBI" id="CHEBI:78442"/>
        <dbReference type="ChEBI" id="CHEBI:78528"/>
        <dbReference type="ChEBI" id="CHEBI:456215"/>
        <dbReference type="EC" id="6.1.1.5"/>
    </reaction>
</comment>
<comment type="cofactor">
    <cofactor evidence="1">
        <name>Zn(2+)</name>
        <dbReference type="ChEBI" id="CHEBI:29105"/>
    </cofactor>
    <text evidence="1">Binds 1 zinc ion per subunit.</text>
</comment>
<comment type="subunit">
    <text evidence="1">Monomer.</text>
</comment>
<comment type="subcellular location">
    <subcellularLocation>
        <location evidence="1">Cytoplasm</location>
    </subcellularLocation>
</comment>
<comment type="domain">
    <text evidence="1">IleRS has two distinct active sites: one for aminoacylation and one for editing. The misactivated valine is translocated from the active site to the editing site, which sterically excludes the correctly activated isoleucine. The single editing site contains two valyl binding pockets, one specific for each substrate (Val-AMP or Val-tRNA(Ile)).</text>
</comment>
<comment type="similarity">
    <text evidence="1">Belongs to the class-I aminoacyl-tRNA synthetase family. IleS type 1 subfamily.</text>
</comment>
<organism>
    <name type="scientific">Burkholderia pseudomallei (strain K96243)</name>
    <dbReference type="NCBI Taxonomy" id="272560"/>
    <lineage>
        <taxon>Bacteria</taxon>
        <taxon>Pseudomonadati</taxon>
        <taxon>Pseudomonadota</taxon>
        <taxon>Betaproteobacteria</taxon>
        <taxon>Burkholderiales</taxon>
        <taxon>Burkholderiaceae</taxon>
        <taxon>Burkholderia</taxon>
        <taxon>pseudomallei group</taxon>
    </lineage>
</organism>
<proteinExistence type="inferred from homology"/>
<sequence>MSNKKADSKPQAKYPVNLLDTPFPMRGDLPKREPQWVEDWEARGVYEKIRAASQGRPKFILHDGPPYANGDIHLGHAVNKILKDMVVKSRNMAGFDAPYVPGWDCHGMPIEIQIEKQFGKSLPAAEVMAKARAYATEQIEKQKVGFKRLGVLGEWGNPYKTMNFQNEAEEIRALGKIIEKGYVYRGLKPVNWCFDCGSALAEAEVEYKDRTDPTIDVLFAFAEPEKTAHAFGLAELPRAEGGIVIWTTTPWTIPANQALNLHPEIVYALVDTERGLLVMAEERVEACMKDFGLTGRVIARTPGEKLANLRFHHPLAAAHPGYKRTSPVYLGDYVTTDTGTGVVHSSPAYGVEDFTSCKAHGMTDSDIINPVMGDGRYIESLPLFGGLTIWDANPKIVDALKAAGSLLRNERYAHSYMHCWRHKTPIIYRATSQWFAGMDTQPADGGKTLRETALDAVDATAFYPSWGKQRLHAMIANRPDWTLSRQRQWGVPMAFFVHKETGELHPRTLELLEEVAKRVERQGIEAWQTLDARELIGDDANLYEKNRDTLDVWFDSGTTHWHVLRGSHKDQLQFPADLYLEGSDQHRGWFHSSLLTASMLDGRAPYKGLLTHGFTVDGEGRKMSKSLGNGIDPHEVANRLGAEIIRLWIASTDYSGELAISEEILKRVTEGYRRIRNTLRFLLANLSDFDYAKDALPAGQWLEIDRYAVAFAAQLQAELLAHYEKYEFHPVVAKLQTFCSEDLGGFYLDVLKDRLYTSAPASPARRSAQTALYHVTQGLLRVLAPFLSFTAEEAWRVFQPQSDTIFTETYYAYPEIAGAEALIAKWTLLRDVRGDVTKALEEARTANRIGSSLQAQVEVRASGARYDALASLGDDLKFVLITSAATVVKVDAQGDESVDVAASTYPKCERCWHYREDVGAHADHPTLCGRCFSNLFENGETRSAA</sequence>
<keyword id="KW-0030">Aminoacyl-tRNA synthetase</keyword>
<keyword id="KW-0067">ATP-binding</keyword>
<keyword id="KW-0963">Cytoplasm</keyword>
<keyword id="KW-0436">Ligase</keyword>
<keyword id="KW-0479">Metal-binding</keyword>
<keyword id="KW-0547">Nucleotide-binding</keyword>
<keyword id="KW-0648">Protein biosynthesis</keyword>
<keyword id="KW-1185">Reference proteome</keyword>
<keyword id="KW-0862">Zinc</keyword>
<accession>Q63WI3</accession>
<feature type="chain" id="PRO_0000098370" description="Isoleucine--tRNA ligase 1">
    <location>
        <begin position="1"/>
        <end position="945"/>
    </location>
</feature>
<feature type="short sequence motif" description="'HIGH' region">
    <location>
        <begin position="66"/>
        <end position="76"/>
    </location>
</feature>
<feature type="short sequence motif" description="'KMSKS' region">
    <location>
        <begin position="622"/>
        <end position="626"/>
    </location>
</feature>
<feature type="binding site" evidence="1">
    <location>
        <position position="581"/>
    </location>
    <ligand>
        <name>L-isoleucyl-5'-AMP</name>
        <dbReference type="ChEBI" id="CHEBI:178002"/>
    </ligand>
</feature>
<feature type="binding site" evidence="1">
    <location>
        <position position="625"/>
    </location>
    <ligand>
        <name>ATP</name>
        <dbReference type="ChEBI" id="CHEBI:30616"/>
    </ligand>
</feature>
<feature type="binding site" evidence="1">
    <location>
        <position position="908"/>
    </location>
    <ligand>
        <name>Zn(2+)</name>
        <dbReference type="ChEBI" id="CHEBI:29105"/>
    </ligand>
</feature>
<feature type="binding site" evidence="1">
    <location>
        <position position="911"/>
    </location>
    <ligand>
        <name>Zn(2+)</name>
        <dbReference type="ChEBI" id="CHEBI:29105"/>
    </ligand>
</feature>
<feature type="binding site" evidence="1">
    <location>
        <position position="928"/>
    </location>
    <ligand>
        <name>Zn(2+)</name>
        <dbReference type="ChEBI" id="CHEBI:29105"/>
    </ligand>
</feature>
<feature type="binding site" evidence="1">
    <location>
        <position position="931"/>
    </location>
    <ligand>
        <name>Zn(2+)</name>
        <dbReference type="ChEBI" id="CHEBI:29105"/>
    </ligand>
</feature>
<dbReference type="EC" id="6.1.1.5" evidence="1"/>
<dbReference type="EMBL" id="BX571965">
    <property type="protein sequence ID" value="CAH34900.1"/>
    <property type="molecule type" value="Genomic_DNA"/>
</dbReference>
<dbReference type="RefSeq" id="YP_107533.1">
    <property type="nucleotide sequence ID" value="NC_006350.1"/>
</dbReference>
<dbReference type="SMR" id="Q63WI3"/>
<dbReference type="STRING" id="272560.BPSL0906"/>
<dbReference type="KEGG" id="bps:BPSL0906"/>
<dbReference type="PATRIC" id="fig|272560.51.peg.676"/>
<dbReference type="eggNOG" id="COG0060">
    <property type="taxonomic scope" value="Bacteria"/>
</dbReference>
<dbReference type="Proteomes" id="UP000000605">
    <property type="component" value="Chromosome 1"/>
</dbReference>
<dbReference type="GO" id="GO:0005829">
    <property type="term" value="C:cytosol"/>
    <property type="evidence" value="ECO:0007669"/>
    <property type="project" value="TreeGrafter"/>
</dbReference>
<dbReference type="GO" id="GO:0002161">
    <property type="term" value="F:aminoacyl-tRNA deacylase activity"/>
    <property type="evidence" value="ECO:0007669"/>
    <property type="project" value="InterPro"/>
</dbReference>
<dbReference type="GO" id="GO:0005524">
    <property type="term" value="F:ATP binding"/>
    <property type="evidence" value="ECO:0007669"/>
    <property type="project" value="UniProtKB-UniRule"/>
</dbReference>
<dbReference type="GO" id="GO:0004822">
    <property type="term" value="F:isoleucine-tRNA ligase activity"/>
    <property type="evidence" value="ECO:0007669"/>
    <property type="project" value="UniProtKB-UniRule"/>
</dbReference>
<dbReference type="GO" id="GO:0000049">
    <property type="term" value="F:tRNA binding"/>
    <property type="evidence" value="ECO:0007669"/>
    <property type="project" value="InterPro"/>
</dbReference>
<dbReference type="GO" id="GO:0008270">
    <property type="term" value="F:zinc ion binding"/>
    <property type="evidence" value="ECO:0007669"/>
    <property type="project" value="UniProtKB-UniRule"/>
</dbReference>
<dbReference type="GO" id="GO:0006428">
    <property type="term" value="P:isoleucyl-tRNA aminoacylation"/>
    <property type="evidence" value="ECO:0007669"/>
    <property type="project" value="UniProtKB-UniRule"/>
</dbReference>
<dbReference type="CDD" id="cd07960">
    <property type="entry name" value="Anticodon_Ia_Ile_BEm"/>
    <property type="match status" value="1"/>
</dbReference>
<dbReference type="CDD" id="cd00818">
    <property type="entry name" value="IleRS_core"/>
    <property type="match status" value="1"/>
</dbReference>
<dbReference type="FunFam" id="3.40.50.620:FF:000042">
    <property type="entry name" value="Isoleucine--tRNA ligase"/>
    <property type="match status" value="1"/>
</dbReference>
<dbReference type="FunFam" id="3.40.50.620:FF:000048">
    <property type="entry name" value="Isoleucine--tRNA ligase"/>
    <property type="match status" value="1"/>
</dbReference>
<dbReference type="Gene3D" id="1.10.730.20">
    <property type="match status" value="1"/>
</dbReference>
<dbReference type="Gene3D" id="3.40.50.620">
    <property type="entry name" value="HUPs"/>
    <property type="match status" value="2"/>
</dbReference>
<dbReference type="Gene3D" id="3.90.740.10">
    <property type="entry name" value="Valyl/Leucyl/Isoleucyl-tRNA synthetase, editing domain"/>
    <property type="match status" value="1"/>
</dbReference>
<dbReference type="HAMAP" id="MF_02002">
    <property type="entry name" value="Ile_tRNA_synth_type1"/>
    <property type="match status" value="1"/>
</dbReference>
<dbReference type="InterPro" id="IPR001412">
    <property type="entry name" value="aa-tRNA-synth_I_CS"/>
</dbReference>
<dbReference type="InterPro" id="IPR002300">
    <property type="entry name" value="aa-tRNA-synth_Ia"/>
</dbReference>
<dbReference type="InterPro" id="IPR033708">
    <property type="entry name" value="Anticodon_Ile_BEm"/>
</dbReference>
<dbReference type="InterPro" id="IPR002301">
    <property type="entry name" value="Ile-tRNA-ligase"/>
</dbReference>
<dbReference type="InterPro" id="IPR023585">
    <property type="entry name" value="Ile-tRNA-ligase_type1"/>
</dbReference>
<dbReference type="InterPro" id="IPR050081">
    <property type="entry name" value="Ile-tRNA_ligase"/>
</dbReference>
<dbReference type="InterPro" id="IPR013155">
    <property type="entry name" value="M/V/L/I-tRNA-synth_anticd-bd"/>
</dbReference>
<dbReference type="InterPro" id="IPR014729">
    <property type="entry name" value="Rossmann-like_a/b/a_fold"/>
</dbReference>
<dbReference type="InterPro" id="IPR009080">
    <property type="entry name" value="tRNAsynth_Ia_anticodon-bd"/>
</dbReference>
<dbReference type="InterPro" id="IPR009008">
    <property type="entry name" value="Val/Leu/Ile-tRNA-synth_edit"/>
</dbReference>
<dbReference type="InterPro" id="IPR010663">
    <property type="entry name" value="Znf_FPG/IleRS"/>
</dbReference>
<dbReference type="NCBIfam" id="TIGR00392">
    <property type="entry name" value="ileS"/>
    <property type="match status" value="1"/>
</dbReference>
<dbReference type="PANTHER" id="PTHR42765:SF1">
    <property type="entry name" value="ISOLEUCINE--TRNA LIGASE, MITOCHONDRIAL"/>
    <property type="match status" value="1"/>
</dbReference>
<dbReference type="PANTHER" id="PTHR42765">
    <property type="entry name" value="SOLEUCYL-TRNA SYNTHETASE"/>
    <property type="match status" value="1"/>
</dbReference>
<dbReference type="Pfam" id="PF08264">
    <property type="entry name" value="Anticodon_1"/>
    <property type="match status" value="1"/>
</dbReference>
<dbReference type="Pfam" id="PF00133">
    <property type="entry name" value="tRNA-synt_1"/>
    <property type="match status" value="1"/>
</dbReference>
<dbReference type="Pfam" id="PF06827">
    <property type="entry name" value="zf-FPG_IleRS"/>
    <property type="match status" value="1"/>
</dbReference>
<dbReference type="PRINTS" id="PR00984">
    <property type="entry name" value="TRNASYNTHILE"/>
</dbReference>
<dbReference type="SUPFAM" id="SSF47323">
    <property type="entry name" value="Anticodon-binding domain of a subclass of class I aminoacyl-tRNA synthetases"/>
    <property type="match status" value="1"/>
</dbReference>
<dbReference type="SUPFAM" id="SSF52374">
    <property type="entry name" value="Nucleotidylyl transferase"/>
    <property type="match status" value="1"/>
</dbReference>
<dbReference type="SUPFAM" id="SSF50677">
    <property type="entry name" value="ValRS/IleRS/LeuRS editing domain"/>
    <property type="match status" value="1"/>
</dbReference>
<dbReference type="PROSITE" id="PS00178">
    <property type="entry name" value="AA_TRNA_LIGASE_I"/>
    <property type="match status" value="1"/>
</dbReference>
<reference key="1">
    <citation type="journal article" date="2004" name="Proc. Natl. Acad. Sci. U.S.A.">
        <title>Genomic plasticity of the causative agent of melioidosis, Burkholderia pseudomallei.</title>
        <authorList>
            <person name="Holden M.T.G."/>
            <person name="Titball R.W."/>
            <person name="Peacock S.J."/>
            <person name="Cerdeno-Tarraga A.-M."/>
            <person name="Atkins T."/>
            <person name="Crossman L.C."/>
            <person name="Pitt T."/>
            <person name="Churcher C."/>
            <person name="Mungall K.L."/>
            <person name="Bentley S.D."/>
            <person name="Sebaihia M."/>
            <person name="Thomson N.R."/>
            <person name="Bason N."/>
            <person name="Beacham I.R."/>
            <person name="Brooks K."/>
            <person name="Brown K.A."/>
            <person name="Brown N.F."/>
            <person name="Challis G.L."/>
            <person name="Cherevach I."/>
            <person name="Chillingworth T."/>
            <person name="Cronin A."/>
            <person name="Crossett B."/>
            <person name="Davis P."/>
            <person name="DeShazer D."/>
            <person name="Feltwell T."/>
            <person name="Fraser A."/>
            <person name="Hance Z."/>
            <person name="Hauser H."/>
            <person name="Holroyd S."/>
            <person name="Jagels K."/>
            <person name="Keith K.E."/>
            <person name="Maddison M."/>
            <person name="Moule S."/>
            <person name="Price C."/>
            <person name="Quail M.A."/>
            <person name="Rabbinowitsch E."/>
            <person name="Rutherford K."/>
            <person name="Sanders M."/>
            <person name="Simmonds M."/>
            <person name="Songsivilai S."/>
            <person name="Stevens K."/>
            <person name="Tumapa S."/>
            <person name="Vesaratchavest M."/>
            <person name="Whitehead S."/>
            <person name="Yeats C."/>
            <person name="Barrell B.G."/>
            <person name="Oyston P.C.F."/>
            <person name="Parkhill J."/>
        </authorList>
    </citation>
    <scope>NUCLEOTIDE SEQUENCE [LARGE SCALE GENOMIC DNA]</scope>
    <source>
        <strain>K96243</strain>
    </source>
</reference>